<keyword id="KW-0067">ATP-binding</keyword>
<keyword id="KW-0963">Cytoplasm</keyword>
<keyword id="KW-0275">Fatty acid biosynthesis</keyword>
<keyword id="KW-0276">Fatty acid metabolism</keyword>
<keyword id="KW-0444">Lipid biosynthesis</keyword>
<keyword id="KW-0443">Lipid metabolism</keyword>
<keyword id="KW-0479">Metal-binding</keyword>
<keyword id="KW-0547">Nucleotide-binding</keyword>
<keyword id="KW-1185">Reference proteome</keyword>
<keyword id="KW-0808">Transferase</keyword>
<keyword id="KW-0862">Zinc</keyword>
<keyword id="KW-0863">Zinc-finger</keyword>
<proteinExistence type="inferred from homology"/>
<accession>Q65G80</accession>
<accession>Q62RN5</accession>
<protein>
    <recommendedName>
        <fullName evidence="1">Acetyl-coenzyme A carboxylase carboxyl transferase subunit beta</fullName>
        <shortName evidence="1">ACCase subunit beta</shortName>
        <shortName evidence="1">Acetyl-CoA carboxylase carboxyltransferase subunit beta</shortName>
        <ecNumber evidence="1">2.1.3.15</ecNumber>
    </recommendedName>
</protein>
<dbReference type="EC" id="2.1.3.15" evidence="1"/>
<dbReference type="EMBL" id="CP000002">
    <property type="protein sequence ID" value="AAU24575.1"/>
    <property type="molecule type" value="Genomic_DNA"/>
</dbReference>
<dbReference type="EMBL" id="AE017333">
    <property type="protein sequence ID" value="AAU41934.1"/>
    <property type="molecule type" value="Genomic_DNA"/>
</dbReference>
<dbReference type="RefSeq" id="WP_003184337.1">
    <property type="nucleotide sequence ID" value="NC_006322.1"/>
</dbReference>
<dbReference type="SMR" id="Q65G80"/>
<dbReference type="STRING" id="279010.BL00405"/>
<dbReference type="GeneID" id="92860338"/>
<dbReference type="KEGG" id="bld:BLi03070"/>
<dbReference type="KEGG" id="bli:BL00405"/>
<dbReference type="eggNOG" id="COG0777">
    <property type="taxonomic scope" value="Bacteria"/>
</dbReference>
<dbReference type="HOGENOM" id="CLU_015486_1_1_9"/>
<dbReference type="UniPathway" id="UPA00655">
    <property type="reaction ID" value="UER00711"/>
</dbReference>
<dbReference type="Proteomes" id="UP000000606">
    <property type="component" value="Chromosome"/>
</dbReference>
<dbReference type="GO" id="GO:0009317">
    <property type="term" value="C:acetyl-CoA carboxylase complex"/>
    <property type="evidence" value="ECO:0007669"/>
    <property type="project" value="InterPro"/>
</dbReference>
<dbReference type="GO" id="GO:0003989">
    <property type="term" value="F:acetyl-CoA carboxylase activity"/>
    <property type="evidence" value="ECO:0007669"/>
    <property type="project" value="InterPro"/>
</dbReference>
<dbReference type="GO" id="GO:0005524">
    <property type="term" value="F:ATP binding"/>
    <property type="evidence" value="ECO:0007669"/>
    <property type="project" value="UniProtKB-KW"/>
</dbReference>
<dbReference type="GO" id="GO:0016743">
    <property type="term" value="F:carboxyl- or carbamoyltransferase activity"/>
    <property type="evidence" value="ECO:0007669"/>
    <property type="project" value="UniProtKB-UniRule"/>
</dbReference>
<dbReference type="GO" id="GO:0008270">
    <property type="term" value="F:zinc ion binding"/>
    <property type="evidence" value="ECO:0007669"/>
    <property type="project" value="UniProtKB-UniRule"/>
</dbReference>
<dbReference type="GO" id="GO:0006633">
    <property type="term" value="P:fatty acid biosynthetic process"/>
    <property type="evidence" value="ECO:0007669"/>
    <property type="project" value="UniProtKB-KW"/>
</dbReference>
<dbReference type="GO" id="GO:2001295">
    <property type="term" value="P:malonyl-CoA biosynthetic process"/>
    <property type="evidence" value="ECO:0007669"/>
    <property type="project" value="UniProtKB-UniRule"/>
</dbReference>
<dbReference type="Gene3D" id="3.90.226.10">
    <property type="entry name" value="2-enoyl-CoA Hydratase, Chain A, domain 1"/>
    <property type="match status" value="1"/>
</dbReference>
<dbReference type="HAMAP" id="MF_01395">
    <property type="entry name" value="AcetylCoA_CT_beta"/>
    <property type="match status" value="1"/>
</dbReference>
<dbReference type="InterPro" id="IPR034733">
    <property type="entry name" value="AcCoA_carboxyl_beta"/>
</dbReference>
<dbReference type="InterPro" id="IPR000438">
    <property type="entry name" value="Acetyl_CoA_COase_Trfase_b_su"/>
</dbReference>
<dbReference type="InterPro" id="IPR029045">
    <property type="entry name" value="ClpP/crotonase-like_dom_sf"/>
</dbReference>
<dbReference type="InterPro" id="IPR011762">
    <property type="entry name" value="COA_CT_N"/>
</dbReference>
<dbReference type="InterPro" id="IPR041010">
    <property type="entry name" value="Znf-ACC"/>
</dbReference>
<dbReference type="NCBIfam" id="TIGR00515">
    <property type="entry name" value="accD"/>
    <property type="match status" value="1"/>
</dbReference>
<dbReference type="PANTHER" id="PTHR42995">
    <property type="entry name" value="ACETYL-COENZYME A CARBOXYLASE CARBOXYL TRANSFERASE SUBUNIT BETA, CHLOROPLASTIC"/>
    <property type="match status" value="1"/>
</dbReference>
<dbReference type="PANTHER" id="PTHR42995:SF5">
    <property type="entry name" value="ACETYL-COENZYME A CARBOXYLASE CARBOXYL TRANSFERASE SUBUNIT BETA, CHLOROPLASTIC"/>
    <property type="match status" value="1"/>
</dbReference>
<dbReference type="Pfam" id="PF01039">
    <property type="entry name" value="Carboxyl_trans"/>
    <property type="match status" value="1"/>
</dbReference>
<dbReference type="Pfam" id="PF17848">
    <property type="entry name" value="Zn_ribbon_ACC"/>
    <property type="match status" value="1"/>
</dbReference>
<dbReference type="PRINTS" id="PR01070">
    <property type="entry name" value="ACCCTRFRASEB"/>
</dbReference>
<dbReference type="SUPFAM" id="SSF52096">
    <property type="entry name" value="ClpP/crotonase"/>
    <property type="match status" value="1"/>
</dbReference>
<dbReference type="PROSITE" id="PS50980">
    <property type="entry name" value="COA_CT_NTER"/>
    <property type="match status" value="1"/>
</dbReference>
<comment type="function">
    <text evidence="1">Component of the acetyl coenzyme A carboxylase (ACC) complex. Biotin carboxylase (BC) catalyzes the carboxylation of biotin on its carrier protein (BCCP) and then the CO(2) group is transferred by the transcarboxylase to acetyl-CoA to form malonyl-CoA.</text>
</comment>
<comment type="catalytic activity">
    <reaction evidence="1">
        <text>N(6)-carboxybiotinyl-L-lysyl-[protein] + acetyl-CoA = N(6)-biotinyl-L-lysyl-[protein] + malonyl-CoA</text>
        <dbReference type="Rhea" id="RHEA:54728"/>
        <dbReference type="Rhea" id="RHEA-COMP:10505"/>
        <dbReference type="Rhea" id="RHEA-COMP:10506"/>
        <dbReference type="ChEBI" id="CHEBI:57288"/>
        <dbReference type="ChEBI" id="CHEBI:57384"/>
        <dbReference type="ChEBI" id="CHEBI:83144"/>
        <dbReference type="ChEBI" id="CHEBI:83145"/>
        <dbReference type="EC" id="2.1.3.15"/>
    </reaction>
</comment>
<comment type="cofactor">
    <cofactor evidence="1">
        <name>Zn(2+)</name>
        <dbReference type="ChEBI" id="CHEBI:29105"/>
    </cofactor>
    <text evidence="1">Binds 1 zinc ion per subunit.</text>
</comment>
<comment type="pathway">
    <text evidence="1">Lipid metabolism; malonyl-CoA biosynthesis; malonyl-CoA from acetyl-CoA: step 1/1.</text>
</comment>
<comment type="subunit">
    <text evidence="1">Acetyl-CoA carboxylase is a heterohexamer composed of biotin carboxyl carrier protein (AccB), biotin carboxylase (AccC) and two subunits each of ACCase subunit alpha (AccA) and ACCase subunit beta (AccD).</text>
</comment>
<comment type="subcellular location">
    <subcellularLocation>
        <location evidence="1">Cytoplasm</location>
    </subcellularLocation>
</comment>
<comment type="similarity">
    <text evidence="1">Belongs to the AccD/PCCB family.</text>
</comment>
<gene>
    <name evidence="1" type="primary">accD</name>
    <name type="ordered locus">BLi03070</name>
    <name type="ordered locus">BL00405</name>
</gene>
<feature type="chain" id="PRO_0000389684" description="Acetyl-coenzyme A carboxylase carboxyl transferase subunit beta">
    <location>
        <begin position="1"/>
        <end position="291"/>
    </location>
</feature>
<feature type="domain" description="CoA carboxyltransferase N-terminal" evidence="2">
    <location>
        <begin position="29"/>
        <end position="291"/>
    </location>
</feature>
<feature type="zinc finger region" description="C4-type" evidence="1">
    <location>
        <begin position="33"/>
        <end position="55"/>
    </location>
</feature>
<feature type="binding site" evidence="1">
    <location>
        <position position="33"/>
    </location>
    <ligand>
        <name>Zn(2+)</name>
        <dbReference type="ChEBI" id="CHEBI:29105"/>
    </ligand>
</feature>
<feature type="binding site" evidence="1">
    <location>
        <position position="36"/>
    </location>
    <ligand>
        <name>Zn(2+)</name>
        <dbReference type="ChEBI" id="CHEBI:29105"/>
    </ligand>
</feature>
<feature type="binding site" evidence="1">
    <location>
        <position position="52"/>
    </location>
    <ligand>
        <name>Zn(2+)</name>
        <dbReference type="ChEBI" id="CHEBI:29105"/>
    </ligand>
</feature>
<feature type="binding site" evidence="1">
    <location>
        <position position="55"/>
    </location>
    <ligand>
        <name>Zn(2+)</name>
        <dbReference type="ChEBI" id="CHEBI:29105"/>
    </ligand>
</feature>
<sequence>MLKDIFSKKKKKYASVPAESAKQDVPEGIMTKCPDCKKIMLTKELDKNLRVCMNCGYHLQMNAKQRIKSLLDDGSFEEFNQDMMSENPLEFPGYLEKLQKDREKTSLNEAVVTGKGTIDGSPAVVAVMDSSFRMGSMGSVVGEKITLAIEKAREEKVPFIIFTASGGARMQEGLLSLMQMAKTSSALKLFSEEQGLIISVMTHPTTGGVSASFASLGDYNLAEPGALIGFAGRRIIEQTIREELPEDFQTAEFLLKHGQLDSVVHRADMKKTLGSILKMHQTGGDLEWLEN</sequence>
<reference key="1">
    <citation type="journal article" date="2004" name="J. Mol. Microbiol. Biotechnol.">
        <title>The complete genome sequence of Bacillus licheniformis DSM13, an organism with great industrial potential.</title>
        <authorList>
            <person name="Veith B."/>
            <person name="Herzberg C."/>
            <person name="Steckel S."/>
            <person name="Feesche J."/>
            <person name="Maurer K.H."/>
            <person name="Ehrenreich P."/>
            <person name="Baeumer S."/>
            <person name="Henne A."/>
            <person name="Liesegang H."/>
            <person name="Merkl R."/>
            <person name="Ehrenreich A."/>
            <person name="Gottschalk G."/>
        </authorList>
    </citation>
    <scope>NUCLEOTIDE SEQUENCE [LARGE SCALE GENOMIC DNA]</scope>
    <source>
        <strain>ATCC 14580 / DSM 13 / JCM 2505 / CCUG 7422 / NBRC 12200 / NCIMB 9375 / NCTC 10341 / NRRL NRS-1264 / Gibson 46</strain>
    </source>
</reference>
<reference key="2">
    <citation type="journal article" date="2004" name="Genome Biol.">
        <title>Complete genome sequence of the industrial bacterium Bacillus licheniformis and comparisons with closely related Bacillus species.</title>
        <authorList>
            <person name="Rey M.W."/>
            <person name="Ramaiya P."/>
            <person name="Nelson B.A."/>
            <person name="Brody-Karpin S.D."/>
            <person name="Zaretsky E.J."/>
            <person name="Tang M."/>
            <person name="Lopez de Leon A."/>
            <person name="Xiang H."/>
            <person name="Gusti V."/>
            <person name="Clausen I.G."/>
            <person name="Olsen P.B."/>
            <person name="Rasmussen M.D."/>
            <person name="Andersen J.T."/>
            <person name="Joergensen P.L."/>
            <person name="Larsen T.S."/>
            <person name="Sorokin A."/>
            <person name="Bolotin A."/>
            <person name="Lapidus A."/>
            <person name="Galleron N."/>
            <person name="Ehrlich S.D."/>
            <person name="Berka R.M."/>
        </authorList>
    </citation>
    <scope>NUCLEOTIDE SEQUENCE [LARGE SCALE GENOMIC DNA]</scope>
    <source>
        <strain>ATCC 14580 / DSM 13 / JCM 2505 / CCUG 7422 / NBRC 12200 / NCIMB 9375 / NCTC 10341 / NRRL NRS-1264 / Gibson 46</strain>
    </source>
</reference>
<organism>
    <name type="scientific">Bacillus licheniformis (strain ATCC 14580 / DSM 13 / JCM 2505 / CCUG 7422 / NBRC 12200 / NCIMB 9375 / NCTC 10341 / NRRL NRS-1264 / Gibson 46)</name>
    <dbReference type="NCBI Taxonomy" id="279010"/>
    <lineage>
        <taxon>Bacteria</taxon>
        <taxon>Bacillati</taxon>
        <taxon>Bacillota</taxon>
        <taxon>Bacilli</taxon>
        <taxon>Bacillales</taxon>
        <taxon>Bacillaceae</taxon>
        <taxon>Bacillus</taxon>
    </lineage>
</organism>
<evidence type="ECO:0000255" key="1">
    <source>
        <dbReference type="HAMAP-Rule" id="MF_01395"/>
    </source>
</evidence>
<evidence type="ECO:0000255" key="2">
    <source>
        <dbReference type="PROSITE-ProRule" id="PRU01136"/>
    </source>
</evidence>
<name>ACCD_BACLD</name>